<organism>
    <name type="scientific">Arabidopsis thaliana</name>
    <name type="common">Mouse-ear cress</name>
    <dbReference type="NCBI Taxonomy" id="3702"/>
    <lineage>
        <taxon>Eukaryota</taxon>
        <taxon>Viridiplantae</taxon>
        <taxon>Streptophyta</taxon>
        <taxon>Embryophyta</taxon>
        <taxon>Tracheophyta</taxon>
        <taxon>Spermatophyta</taxon>
        <taxon>Magnoliopsida</taxon>
        <taxon>eudicotyledons</taxon>
        <taxon>Gunneridae</taxon>
        <taxon>Pentapetalae</taxon>
        <taxon>rosids</taxon>
        <taxon>malvids</taxon>
        <taxon>Brassicales</taxon>
        <taxon>Brassicaceae</taxon>
        <taxon>Camelineae</taxon>
        <taxon>Arabidopsis</taxon>
    </lineage>
</organism>
<dbReference type="EMBL" id="AB013389">
    <property type="protein sequence ID" value="BAB10937.1"/>
    <property type="status" value="ALT_SEQ"/>
    <property type="molecule type" value="Genomic_DNA"/>
</dbReference>
<dbReference type="EMBL" id="CP002688">
    <property type="protein sequence ID" value="AED98238.1"/>
    <property type="molecule type" value="Genomic_DNA"/>
</dbReference>
<dbReference type="EMBL" id="AK229177">
    <property type="protein sequence ID" value="BAF01047.1"/>
    <property type="molecule type" value="mRNA"/>
</dbReference>
<dbReference type="RefSeq" id="NP_201462.2">
    <molecule id="Q9FJX9-1"/>
    <property type="nucleotide sequence ID" value="NM_126059.5"/>
</dbReference>
<dbReference type="FunCoup" id="Q9FJX9">
    <property type="interactions" value="4"/>
</dbReference>
<dbReference type="STRING" id="3702.Q9FJX9"/>
<dbReference type="iPTMnet" id="Q9FJX9"/>
<dbReference type="PaxDb" id="3702-AT5G66610.2"/>
<dbReference type="ProteomicsDB" id="224584">
    <molecule id="Q9FJX9-1"/>
</dbReference>
<dbReference type="EnsemblPlants" id="AT5G66610.1">
    <molecule id="Q9FJX9-1"/>
    <property type="protein sequence ID" value="AT5G66610.1"/>
    <property type="gene ID" value="AT5G66610"/>
</dbReference>
<dbReference type="GeneID" id="836793"/>
<dbReference type="Gramene" id="AT5G66610.1">
    <molecule id="Q9FJX9-1"/>
    <property type="protein sequence ID" value="AT5G66610.1"/>
    <property type="gene ID" value="AT5G66610"/>
</dbReference>
<dbReference type="KEGG" id="ath:AT5G66610"/>
<dbReference type="Araport" id="AT5G66610"/>
<dbReference type="TAIR" id="AT5G66610">
    <property type="gene designation" value="DAR7"/>
</dbReference>
<dbReference type="eggNOG" id="KOG1703">
    <property type="taxonomic scope" value="Eukaryota"/>
</dbReference>
<dbReference type="HOGENOM" id="CLU_015906_3_0_1"/>
<dbReference type="InParanoid" id="Q9FJX9"/>
<dbReference type="PhylomeDB" id="Q9FJX9"/>
<dbReference type="PRO" id="PR:Q9FJX9"/>
<dbReference type="Proteomes" id="UP000006548">
    <property type="component" value="Chromosome 5"/>
</dbReference>
<dbReference type="ExpressionAtlas" id="Q9FJX9">
    <property type="expression patterns" value="baseline and differential"/>
</dbReference>
<dbReference type="GO" id="GO:0046872">
    <property type="term" value="F:metal ion binding"/>
    <property type="evidence" value="ECO:0007669"/>
    <property type="project" value="UniProtKB-KW"/>
</dbReference>
<dbReference type="GO" id="GO:0043130">
    <property type="term" value="F:ubiquitin binding"/>
    <property type="evidence" value="ECO:0000250"/>
    <property type="project" value="UniProtKB"/>
</dbReference>
<dbReference type="CDD" id="cd09396">
    <property type="entry name" value="LIM_DA1"/>
    <property type="match status" value="1"/>
</dbReference>
<dbReference type="FunFam" id="2.10.110.10:FF:000184">
    <property type="entry name" value="DA1-related protein 7"/>
    <property type="match status" value="1"/>
</dbReference>
<dbReference type="Gene3D" id="2.10.110.10">
    <property type="entry name" value="Cysteine Rich Protein"/>
    <property type="match status" value="1"/>
</dbReference>
<dbReference type="InterPro" id="IPR045218">
    <property type="entry name" value="DA1-like"/>
</dbReference>
<dbReference type="InterPro" id="IPR022087">
    <property type="entry name" value="DA1-like_dom"/>
</dbReference>
<dbReference type="InterPro" id="IPR001781">
    <property type="entry name" value="Znf_LIM"/>
</dbReference>
<dbReference type="PANTHER" id="PTHR24209">
    <property type="entry name" value="PROTEIN DA1-RELATED 2"/>
    <property type="match status" value="1"/>
</dbReference>
<dbReference type="PANTHER" id="PTHR24209:SF28">
    <property type="entry name" value="PROTEIN DA1-RELATED 4-RELATED"/>
    <property type="match status" value="1"/>
</dbReference>
<dbReference type="Pfam" id="PF12315">
    <property type="entry name" value="DA1-like"/>
    <property type="match status" value="1"/>
</dbReference>
<dbReference type="Pfam" id="PF00412">
    <property type="entry name" value="LIM"/>
    <property type="match status" value="1"/>
</dbReference>
<dbReference type="Pfam" id="PF23625">
    <property type="entry name" value="UIM_2"/>
    <property type="match status" value="3"/>
</dbReference>
<dbReference type="SMART" id="SM00132">
    <property type="entry name" value="LIM"/>
    <property type="match status" value="1"/>
</dbReference>
<dbReference type="SUPFAM" id="SSF57716">
    <property type="entry name" value="Glucocorticoid receptor-like (DNA-binding domain)"/>
    <property type="match status" value="1"/>
</dbReference>
<dbReference type="PROSITE" id="PS00478">
    <property type="entry name" value="LIM_DOMAIN_1"/>
    <property type="match status" value="1"/>
</dbReference>
<dbReference type="PROSITE" id="PS50023">
    <property type="entry name" value="LIM_DOMAIN_2"/>
    <property type="match status" value="1"/>
</dbReference>
<dbReference type="PROSITE" id="PS00142">
    <property type="entry name" value="ZINC_PROTEASE"/>
    <property type="match status" value="1"/>
</dbReference>
<sequence>MWCLSCFKPSTKHDPSEDRFEEETNIVTGISLYEDVILRQRRSEADQIEWAIQDSFNPQETSRCRQREEDDQIARGLQYVEETELDKSVVDEEDQQLSKIVEESLKEKGKSKQFEDDQVENDEQQALMVQESLYMVELSAQLEEDKNISTIPPLNEDAQLQKVIWESAKGKGQIEHFKDPVEEDGNLPRVDLNVNHPHSICDGCKSAIEYGRSVHALGVNWHPECFCCRYCDKPIAMHEFSNTKGRCHITCYERSHPNCHVCKKKFPGRKYKEHPFWKEKYCPFHEVDGTPKCCSCERLEPWGTKYVMLADNRWLCVKCMECAVMDTYECQPLHFEIREFFGSLNMKVEKEFPLLLVEKEALKKAEAQEKIDNQHGVVTRGICLSEGQIVNSVFKKPTMGPNGELVSLGTEPQKVVGGCEVTAILILYGLPRLLTGYILAHEMMHAWLRLNGYRNLKLELEEGICQVLGHMWLESQTYSSSAAASSASSSSRTPAANASKKGAQSDYEKKLVEFCKDQIETDDSPVYGVGFRKVNQMVSDSSLHKILKSIQHWTKPDSNL</sequence>
<feature type="chain" id="PRO_0000396942" description="Protein DA1-related 7">
    <location>
        <begin position="1"/>
        <end position="560"/>
    </location>
</feature>
<feature type="domain" description="UIM 1" evidence="3">
    <location>
        <begin position="43"/>
        <end position="62"/>
    </location>
</feature>
<feature type="domain" description="UIM 2" evidence="3">
    <location>
        <begin position="92"/>
        <end position="111"/>
    </location>
</feature>
<feature type="domain" description="UIM 3" evidence="3">
    <location>
        <begin position="155"/>
        <end position="174"/>
    </location>
</feature>
<feature type="domain" description="LIM zinc-binding" evidence="2">
    <location>
        <begin position="199"/>
        <end position="269"/>
    </location>
</feature>
<feature type="sequence conflict" description="In Ref. 3; BAF01047." evidence="3" ref="3">
    <original>Y</original>
    <variation>D</variation>
    <location>
        <position position="33"/>
    </location>
</feature>
<accession>Q9FJX9</accession>
<accession>Q0WPA2</accession>
<gene>
    <name type="primary">DAR7</name>
    <name type="ordered locus">At5g66610</name>
    <name type="ORF">K1F13.29</name>
</gene>
<name>DAR7_ARATH</name>
<protein>
    <recommendedName>
        <fullName>Protein DA1-related 7</fullName>
    </recommendedName>
</protein>
<proteinExistence type="evidence at transcript level"/>
<comment type="function">
    <text evidence="1">Ubiquitin receptor that probably regulates developmental process.</text>
</comment>
<comment type="subunit">
    <text evidence="1">Interacts with ubiquitin.</text>
</comment>
<comment type="alternative products">
    <event type="alternative splicing"/>
    <isoform>
        <id>Q9FJX9-1</id>
        <name>1</name>
        <sequence type="displayed"/>
    </isoform>
    <text>A number of isoforms are produced. According to EST sequences.</text>
</comment>
<comment type="domain">
    <text evidence="1">The UIM domains bind molecules modified by monoubiquitin or ubiquitin chains and promote coupled monoubiquitination.</text>
</comment>
<comment type="sequence caution" evidence="3">
    <conflict type="erroneous gene model prediction">
        <sequence resource="EMBL-CDS" id="BAB10937"/>
    </conflict>
</comment>
<evidence type="ECO:0000250" key="1"/>
<evidence type="ECO:0000255" key="2">
    <source>
        <dbReference type="PROSITE-ProRule" id="PRU00125"/>
    </source>
</evidence>
<evidence type="ECO:0000305" key="3"/>
<reference key="1">
    <citation type="journal article" date="1998" name="DNA Res.">
        <title>Structural analysis of Arabidopsis thaliana chromosome 5. VI. Sequence features of the regions of 1,367,185 bp covered by 19 physically assigned P1 and TAC clones.</title>
        <authorList>
            <person name="Kotani H."/>
            <person name="Nakamura Y."/>
            <person name="Sato S."/>
            <person name="Asamizu E."/>
            <person name="Kaneko T."/>
            <person name="Miyajima N."/>
            <person name="Tabata S."/>
        </authorList>
    </citation>
    <scope>NUCLEOTIDE SEQUENCE [LARGE SCALE GENOMIC DNA]</scope>
    <source>
        <strain>cv. Columbia</strain>
    </source>
</reference>
<reference key="2">
    <citation type="journal article" date="2017" name="Plant J.">
        <title>Araport11: a complete reannotation of the Arabidopsis thaliana reference genome.</title>
        <authorList>
            <person name="Cheng C.Y."/>
            <person name="Krishnakumar V."/>
            <person name="Chan A.P."/>
            <person name="Thibaud-Nissen F."/>
            <person name="Schobel S."/>
            <person name="Town C.D."/>
        </authorList>
    </citation>
    <scope>GENOME REANNOTATION</scope>
    <source>
        <strain>cv. Columbia</strain>
    </source>
</reference>
<reference key="3">
    <citation type="submission" date="2006-07" db="EMBL/GenBank/DDBJ databases">
        <title>Large-scale analysis of RIKEN Arabidopsis full-length (RAFL) cDNAs.</title>
        <authorList>
            <person name="Totoki Y."/>
            <person name="Seki M."/>
            <person name="Ishida J."/>
            <person name="Nakajima M."/>
            <person name="Enju A."/>
            <person name="Kamiya A."/>
            <person name="Narusaka M."/>
            <person name="Shin-i T."/>
            <person name="Nakagawa M."/>
            <person name="Sakamoto N."/>
            <person name="Oishi K."/>
            <person name="Kohara Y."/>
            <person name="Kobayashi M."/>
            <person name="Toyoda A."/>
            <person name="Sakaki Y."/>
            <person name="Sakurai T."/>
            <person name="Iida K."/>
            <person name="Akiyama K."/>
            <person name="Satou M."/>
            <person name="Toyoda T."/>
            <person name="Konagaya A."/>
            <person name="Carninci P."/>
            <person name="Kawai J."/>
            <person name="Hayashizaki Y."/>
            <person name="Shinozaki K."/>
        </authorList>
    </citation>
    <scope>NUCLEOTIDE SEQUENCE [LARGE SCALE MRNA] OF 33-560</scope>
    <source>
        <strain>cv. Columbia</strain>
    </source>
</reference>
<reference key="4">
    <citation type="journal article" date="2008" name="Genes Dev.">
        <title>Control of final seed and organ size by the DA1 gene family in Arabidopsis thaliana.</title>
        <authorList>
            <person name="Li Y."/>
            <person name="Zheng L."/>
            <person name="Corke F."/>
            <person name="Smith C."/>
            <person name="Bevan M.W."/>
        </authorList>
    </citation>
    <scope>GENE FAMILY</scope>
    <scope>NOMENCLATURE</scope>
</reference>
<keyword id="KW-0025">Alternative splicing</keyword>
<keyword id="KW-0440">LIM domain</keyword>
<keyword id="KW-0479">Metal-binding</keyword>
<keyword id="KW-1185">Reference proteome</keyword>
<keyword id="KW-0677">Repeat</keyword>
<keyword id="KW-0862">Zinc</keyword>